<reference key="1">
    <citation type="journal article" date="2006" name="Proc. Natl. Acad. Sci. U.S.A.">
        <title>Comparative genomics of the lactic acid bacteria.</title>
        <authorList>
            <person name="Makarova K.S."/>
            <person name="Slesarev A."/>
            <person name="Wolf Y.I."/>
            <person name="Sorokin A."/>
            <person name="Mirkin B."/>
            <person name="Koonin E.V."/>
            <person name="Pavlov A."/>
            <person name="Pavlova N."/>
            <person name="Karamychev V."/>
            <person name="Polouchine N."/>
            <person name="Shakhova V."/>
            <person name="Grigoriev I."/>
            <person name="Lou Y."/>
            <person name="Rohksar D."/>
            <person name="Lucas S."/>
            <person name="Huang K."/>
            <person name="Goodstein D.M."/>
            <person name="Hawkins T."/>
            <person name="Plengvidhya V."/>
            <person name="Welker D."/>
            <person name="Hughes J."/>
            <person name="Goh Y."/>
            <person name="Benson A."/>
            <person name="Baldwin K."/>
            <person name="Lee J.-H."/>
            <person name="Diaz-Muniz I."/>
            <person name="Dosti B."/>
            <person name="Smeianov V."/>
            <person name="Wechter W."/>
            <person name="Barabote R."/>
            <person name="Lorca G."/>
            <person name="Altermann E."/>
            <person name="Barrangou R."/>
            <person name="Ganesan B."/>
            <person name="Xie Y."/>
            <person name="Rawsthorne H."/>
            <person name="Tamir D."/>
            <person name="Parker C."/>
            <person name="Breidt F."/>
            <person name="Broadbent J.R."/>
            <person name="Hutkins R."/>
            <person name="O'Sullivan D."/>
            <person name="Steele J."/>
            <person name="Unlu G."/>
            <person name="Saier M.H. Jr."/>
            <person name="Klaenhammer T."/>
            <person name="Richardson P."/>
            <person name="Kozyavkin S."/>
            <person name="Weimer B.C."/>
            <person name="Mills D.A."/>
        </authorList>
    </citation>
    <scope>NUCLEOTIDE SEQUENCE [LARGE SCALE GENOMIC DNA]</scope>
    <source>
        <strain>ATCC 33323 / DSM 20243 / BCRC 14619 / CIP 102991 / JCM 1131 / KCTC 3163 / NCIMB 11718 / NCTC 13722 / AM63</strain>
    </source>
</reference>
<comment type="function">
    <text evidence="1">Catalyzes the reversible interconversion of serine and glycine with tetrahydrofolate (THF) serving as the one-carbon carrier. This reaction serves as the major source of one-carbon groups required for the biosynthesis of purines, thymidylate, methionine, and other important biomolecules. Also exhibits THF-independent aldolase activity toward beta-hydroxyamino acids, producing glycine and aldehydes, via a retro-aldol mechanism.</text>
</comment>
<comment type="catalytic activity">
    <reaction evidence="1">
        <text>(6R)-5,10-methylene-5,6,7,8-tetrahydrofolate + glycine + H2O = (6S)-5,6,7,8-tetrahydrofolate + L-serine</text>
        <dbReference type="Rhea" id="RHEA:15481"/>
        <dbReference type="ChEBI" id="CHEBI:15377"/>
        <dbReference type="ChEBI" id="CHEBI:15636"/>
        <dbReference type="ChEBI" id="CHEBI:33384"/>
        <dbReference type="ChEBI" id="CHEBI:57305"/>
        <dbReference type="ChEBI" id="CHEBI:57453"/>
        <dbReference type="EC" id="2.1.2.1"/>
    </reaction>
</comment>
<comment type="cofactor">
    <cofactor evidence="1">
        <name>pyridoxal 5'-phosphate</name>
        <dbReference type="ChEBI" id="CHEBI:597326"/>
    </cofactor>
</comment>
<comment type="pathway">
    <text evidence="1">One-carbon metabolism; tetrahydrofolate interconversion.</text>
</comment>
<comment type="pathway">
    <text evidence="1">Amino-acid biosynthesis; glycine biosynthesis; glycine from L-serine: step 1/1.</text>
</comment>
<comment type="subunit">
    <text evidence="1">Homodimer.</text>
</comment>
<comment type="subcellular location">
    <subcellularLocation>
        <location evidence="1">Cytoplasm</location>
    </subcellularLocation>
</comment>
<comment type="similarity">
    <text evidence="1">Belongs to the SHMT family.</text>
</comment>
<feature type="chain" id="PRO_1000006270" description="Serine hydroxymethyltransferase">
    <location>
        <begin position="1"/>
        <end position="411"/>
    </location>
</feature>
<feature type="binding site" evidence="1">
    <location>
        <begin position="120"/>
        <end position="122"/>
    </location>
    <ligand>
        <name>(6S)-5,6,7,8-tetrahydrofolate</name>
        <dbReference type="ChEBI" id="CHEBI:57453"/>
    </ligand>
</feature>
<feature type="binding site" evidence="1">
    <location>
        <begin position="350"/>
        <end position="352"/>
    </location>
    <ligand>
        <name>(6S)-5,6,7,8-tetrahydrofolate</name>
        <dbReference type="ChEBI" id="CHEBI:57453"/>
    </ligand>
</feature>
<feature type="site" description="Plays an important role in substrate specificity" evidence="1">
    <location>
        <position position="224"/>
    </location>
</feature>
<feature type="modified residue" description="N6-(pyridoxal phosphate)lysine" evidence="1">
    <location>
        <position position="225"/>
    </location>
</feature>
<keyword id="KW-0028">Amino-acid biosynthesis</keyword>
<keyword id="KW-0963">Cytoplasm</keyword>
<keyword id="KW-0554">One-carbon metabolism</keyword>
<keyword id="KW-0663">Pyridoxal phosphate</keyword>
<keyword id="KW-0808">Transferase</keyword>
<gene>
    <name evidence="1" type="primary">glyA</name>
    <name type="ordered locus">LGAS_0256</name>
</gene>
<organism>
    <name type="scientific">Lactobacillus gasseri (strain ATCC 33323 / DSM 20243 / BCRC 14619 / CIP 102991 / JCM 1131 / KCTC 3163 / NCIMB 11718 / NCTC 13722 / AM63)</name>
    <dbReference type="NCBI Taxonomy" id="324831"/>
    <lineage>
        <taxon>Bacteria</taxon>
        <taxon>Bacillati</taxon>
        <taxon>Bacillota</taxon>
        <taxon>Bacilli</taxon>
        <taxon>Lactobacillales</taxon>
        <taxon>Lactobacillaceae</taxon>
        <taxon>Lactobacillus</taxon>
    </lineage>
</organism>
<sequence length="411" mass="44915">MNYGEKAPALWDAIKNEEKRQEDTIELIASENIVSDAVREAQGSVLTNKYAEGYPGKRYYGGCQYIDQVEQLAIDYAKKLFNAEYANVQPHSGSQANMTVYNALLKPGDTILGMGMDAGGHLTHGSKVNFSGKIFNSVSYDLNPETEELDFEKIRQIALENKPKLIIAGASAYSRIIDWQKFREIADEVGAYLMVDMAHIAGLVATGAHPSPIPVADVVTTTTHKTLRGPRGGMILSNNKKLGKKIDSALFPGTQGGPLEHVIAAKAQAFYEDLQPEFSTYIEQVVKNAQAMADEFKKSENIRVVSGGTDNHLMIVDITKTGVTGKDAQNLLDSVNITTNKESIPGDTRSPFITSGLRIGTPAITSRGFKENDAREVARIIIKVLDNPEDKDVLTEAKSSVKSLVDKHQIK</sequence>
<dbReference type="EC" id="2.1.2.1" evidence="1"/>
<dbReference type="EMBL" id="CP000413">
    <property type="protein sequence ID" value="ABJ59664.1"/>
    <property type="molecule type" value="Genomic_DNA"/>
</dbReference>
<dbReference type="RefSeq" id="WP_003650493.1">
    <property type="nucleotide sequence ID" value="NZ_WBMG01000001.1"/>
</dbReference>
<dbReference type="SMR" id="Q046F8"/>
<dbReference type="GeneID" id="29639588"/>
<dbReference type="KEGG" id="lga:LGAS_0256"/>
<dbReference type="HOGENOM" id="CLU_022477_2_1_9"/>
<dbReference type="BioCyc" id="LGAS324831:G1G6Y-255-MONOMER"/>
<dbReference type="UniPathway" id="UPA00193"/>
<dbReference type="UniPathway" id="UPA00288">
    <property type="reaction ID" value="UER01023"/>
</dbReference>
<dbReference type="Proteomes" id="UP000000664">
    <property type="component" value="Chromosome"/>
</dbReference>
<dbReference type="GO" id="GO:0005829">
    <property type="term" value="C:cytosol"/>
    <property type="evidence" value="ECO:0007669"/>
    <property type="project" value="TreeGrafter"/>
</dbReference>
<dbReference type="GO" id="GO:0004372">
    <property type="term" value="F:glycine hydroxymethyltransferase activity"/>
    <property type="evidence" value="ECO:0007669"/>
    <property type="project" value="UniProtKB-UniRule"/>
</dbReference>
<dbReference type="GO" id="GO:0030170">
    <property type="term" value="F:pyridoxal phosphate binding"/>
    <property type="evidence" value="ECO:0007669"/>
    <property type="project" value="UniProtKB-UniRule"/>
</dbReference>
<dbReference type="GO" id="GO:0019264">
    <property type="term" value="P:glycine biosynthetic process from serine"/>
    <property type="evidence" value="ECO:0007669"/>
    <property type="project" value="UniProtKB-UniRule"/>
</dbReference>
<dbReference type="GO" id="GO:0035999">
    <property type="term" value="P:tetrahydrofolate interconversion"/>
    <property type="evidence" value="ECO:0007669"/>
    <property type="project" value="UniProtKB-UniRule"/>
</dbReference>
<dbReference type="CDD" id="cd00378">
    <property type="entry name" value="SHMT"/>
    <property type="match status" value="1"/>
</dbReference>
<dbReference type="FunFam" id="3.40.640.10:FF:000001">
    <property type="entry name" value="Serine hydroxymethyltransferase"/>
    <property type="match status" value="1"/>
</dbReference>
<dbReference type="Gene3D" id="3.90.1150.10">
    <property type="entry name" value="Aspartate Aminotransferase, domain 1"/>
    <property type="match status" value="1"/>
</dbReference>
<dbReference type="Gene3D" id="3.40.640.10">
    <property type="entry name" value="Type I PLP-dependent aspartate aminotransferase-like (Major domain)"/>
    <property type="match status" value="1"/>
</dbReference>
<dbReference type="HAMAP" id="MF_00051">
    <property type="entry name" value="SHMT"/>
    <property type="match status" value="1"/>
</dbReference>
<dbReference type="InterPro" id="IPR015424">
    <property type="entry name" value="PyrdxlP-dep_Trfase"/>
</dbReference>
<dbReference type="InterPro" id="IPR015421">
    <property type="entry name" value="PyrdxlP-dep_Trfase_major"/>
</dbReference>
<dbReference type="InterPro" id="IPR015422">
    <property type="entry name" value="PyrdxlP-dep_Trfase_small"/>
</dbReference>
<dbReference type="InterPro" id="IPR001085">
    <property type="entry name" value="Ser_HO-MeTrfase"/>
</dbReference>
<dbReference type="InterPro" id="IPR049943">
    <property type="entry name" value="Ser_HO-MeTrfase-like"/>
</dbReference>
<dbReference type="InterPro" id="IPR019798">
    <property type="entry name" value="Ser_HO-MeTrfase_PLP_BS"/>
</dbReference>
<dbReference type="InterPro" id="IPR039429">
    <property type="entry name" value="SHMT-like_dom"/>
</dbReference>
<dbReference type="NCBIfam" id="NF000586">
    <property type="entry name" value="PRK00011.1"/>
    <property type="match status" value="1"/>
</dbReference>
<dbReference type="PANTHER" id="PTHR11680">
    <property type="entry name" value="SERINE HYDROXYMETHYLTRANSFERASE"/>
    <property type="match status" value="1"/>
</dbReference>
<dbReference type="PANTHER" id="PTHR11680:SF35">
    <property type="entry name" value="SERINE HYDROXYMETHYLTRANSFERASE 1"/>
    <property type="match status" value="1"/>
</dbReference>
<dbReference type="Pfam" id="PF00464">
    <property type="entry name" value="SHMT"/>
    <property type="match status" value="1"/>
</dbReference>
<dbReference type="PIRSF" id="PIRSF000412">
    <property type="entry name" value="SHMT"/>
    <property type="match status" value="1"/>
</dbReference>
<dbReference type="SUPFAM" id="SSF53383">
    <property type="entry name" value="PLP-dependent transferases"/>
    <property type="match status" value="1"/>
</dbReference>
<dbReference type="PROSITE" id="PS00096">
    <property type="entry name" value="SHMT"/>
    <property type="match status" value="1"/>
</dbReference>
<protein>
    <recommendedName>
        <fullName evidence="1">Serine hydroxymethyltransferase</fullName>
        <shortName evidence="1">SHMT</shortName>
        <shortName evidence="1">Serine methylase</shortName>
        <ecNumber evidence="1">2.1.2.1</ecNumber>
    </recommendedName>
</protein>
<accession>Q046F8</accession>
<proteinExistence type="inferred from homology"/>
<evidence type="ECO:0000255" key="1">
    <source>
        <dbReference type="HAMAP-Rule" id="MF_00051"/>
    </source>
</evidence>
<name>GLYA_LACGA</name>